<name>ADH1_CANAX</name>
<comment type="catalytic activity">
    <reaction>
        <text>a primary alcohol + NAD(+) = an aldehyde + NADH + H(+)</text>
        <dbReference type="Rhea" id="RHEA:10736"/>
        <dbReference type="ChEBI" id="CHEBI:15378"/>
        <dbReference type="ChEBI" id="CHEBI:15734"/>
        <dbReference type="ChEBI" id="CHEBI:17478"/>
        <dbReference type="ChEBI" id="CHEBI:57540"/>
        <dbReference type="ChEBI" id="CHEBI:57945"/>
        <dbReference type="EC" id="1.1.1.1"/>
    </reaction>
</comment>
<comment type="catalytic activity">
    <reaction>
        <text>a secondary alcohol + NAD(+) = a ketone + NADH + H(+)</text>
        <dbReference type="Rhea" id="RHEA:10740"/>
        <dbReference type="ChEBI" id="CHEBI:15378"/>
        <dbReference type="ChEBI" id="CHEBI:17087"/>
        <dbReference type="ChEBI" id="CHEBI:35681"/>
        <dbReference type="ChEBI" id="CHEBI:57540"/>
        <dbReference type="ChEBI" id="CHEBI:57945"/>
        <dbReference type="EC" id="1.1.1.1"/>
    </reaction>
</comment>
<comment type="cofactor">
    <cofactor evidence="1">
        <name>Zn(2+)</name>
        <dbReference type="ChEBI" id="CHEBI:29105"/>
    </cofactor>
    <text evidence="1">Binds 2 Zn(2+) ions per subunit.</text>
</comment>
<comment type="subunit">
    <text evidence="1">Homotetramer.</text>
</comment>
<comment type="subcellular location">
    <subcellularLocation>
        <location evidence="2">Cytoplasm</location>
    </subcellularLocation>
</comment>
<comment type="allergen">
    <text>Causes an allergic reaction in human.</text>
</comment>
<comment type="similarity">
    <text evidence="2">Belongs to the zinc-containing alcohol dehydrogenase family.</text>
</comment>
<protein>
    <recommendedName>
        <fullName>Alcohol dehydrogenase 1</fullName>
        <ecNumber>1.1.1.1</ecNumber>
    </recommendedName>
    <alternativeName>
        <fullName>40 kDa allergen</fullName>
    </alternativeName>
    <alternativeName>
        <fullName>Allergen Can a 1</fullName>
    </alternativeName>
    <alternativeName>
        <fullName>Allergen Can a I</fullName>
    </alternativeName>
    <allergenName>Cand a 1</allergenName>
</protein>
<keyword id="KW-0020">Allergen</keyword>
<keyword id="KW-0963">Cytoplasm</keyword>
<keyword id="KW-0479">Metal-binding</keyword>
<keyword id="KW-0520">NAD</keyword>
<keyword id="KW-0560">Oxidoreductase</keyword>
<keyword id="KW-0862">Zinc</keyword>
<accession>P43067</accession>
<reference key="1">
    <citation type="journal article" date="1996" name="Yeast">
        <title>Structure and regulation of the Candida albicans ADH1 gene encoding an immunogenic alcohol dehydrogenase.</title>
        <authorList>
            <person name="Bertram G."/>
            <person name="Swoboda R.K."/>
            <person name="Gooday G.W."/>
            <person name="Gow N.A.R."/>
            <person name="Brown A.J.P."/>
        </authorList>
    </citation>
    <scope>NUCLEOTIDE SEQUENCE [GENOMIC DNA]</scope>
</reference>
<reference key="2">
    <citation type="submission" date="1994-10" db="EMBL/GenBank/DDBJ databases">
        <authorList>
            <person name="Pendrak M.L."/>
            <person name="Klotz S.A."/>
            <person name="Smith R.L."/>
        </authorList>
    </citation>
    <scope>NUCLEOTIDE SEQUENCE [MRNA]</scope>
    <source>
        <strain>B311A</strain>
    </source>
</reference>
<reference key="3">
    <citation type="journal article" date="1991" name="Clin. Exp. Allergy">
        <title>The 40-kilodalton allergen of Candida albicans is an alcohol dehydrogenase: molecular cloning and immunological analysis using monoclonal antibodies.</title>
        <authorList>
            <person name="Shen H.D."/>
            <person name="Choo K.B."/>
            <person name="Lee H.H."/>
            <person name="Hsieh J.C."/>
            <person name="Lin W.L."/>
            <person name="Lee W.R."/>
            <person name="Han S.H."/>
        </authorList>
    </citation>
    <scope>NUCLEOTIDE SEQUENCE [MRNA] OF 104-313</scope>
</reference>
<evidence type="ECO:0000250" key="1"/>
<evidence type="ECO:0000305" key="2"/>
<dbReference type="EC" id="1.1.1.1"/>
<dbReference type="EMBL" id="X81694">
    <property type="protein sequence ID" value="CAA57342.1"/>
    <property type="molecule type" value="Genomic_DNA"/>
</dbReference>
<dbReference type="EMBL" id="U15924">
    <property type="protein sequence ID" value="AAA53300.1"/>
    <property type="molecule type" value="mRNA"/>
</dbReference>
<dbReference type="PIR" id="S63781">
    <property type="entry name" value="S52153"/>
</dbReference>
<dbReference type="SMR" id="P43067"/>
<dbReference type="Allergome" id="177">
    <property type="allergen name" value="Cand a 1"/>
</dbReference>
<dbReference type="Allergome" id="3173">
    <property type="allergen name" value="Cand a 1.0101"/>
</dbReference>
<dbReference type="MoonDB" id="P43067">
    <property type="type" value="Curated"/>
</dbReference>
<dbReference type="MoonProt" id="P43067"/>
<dbReference type="VEuPathDB" id="FungiDB:C5_05050W_A"/>
<dbReference type="VEuPathDB" id="FungiDB:CAWG_04871"/>
<dbReference type="GO" id="GO:0005737">
    <property type="term" value="C:cytoplasm"/>
    <property type="evidence" value="ECO:0007669"/>
    <property type="project" value="UniProtKB-SubCell"/>
</dbReference>
<dbReference type="GO" id="GO:0004022">
    <property type="term" value="F:alcohol dehydrogenase (NAD+) activity"/>
    <property type="evidence" value="ECO:0007669"/>
    <property type="project" value="UniProtKB-EC"/>
</dbReference>
<dbReference type="GO" id="GO:0008270">
    <property type="term" value="F:zinc ion binding"/>
    <property type="evidence" value="ECO:0007669"/>
    <property type="project" value="InterPro"/>
</dbReference>
<dbReference type="CDD" id="cd08297">
    <property type="entry name" value="CAD3"/>
    <property type="match status" value="1"/>
</dbReference>
<dbReference type="FunFam" id="3.40.50.720:FF:000039">
    <property type="entry name" value="Alcohol dehydrogenase AdhP"/>
    <property type="match status" value="1"/>
</dbReference>
<dbReference type="FunFam" id="3.90.180.10:FF:000002">
    <property type="entry name" value="Alcohol dehydrogenase AdhP"/>
    <property type="match status" value="1"/>
</dbReference>
<dbReference type="Gene3D" id="3.90.180.10">
    <property type="entry name" value="Medium-chain alcohol dehydrogenases, catalytic domain"/>
    <property type="match status" value="1"/>
</dbReference>
<dbReference type="Gene3D" id="3.40.50.720">
    <property type="entry name" value="NAD(P)-binding Rossmann-like Domain"/>
    <property type="match status" value="1"/>
</dbReference>
<dbReference type="InterPro" id="IPR013149">
    <property type="entry name" value="ADH-like_C"/>
</dbReference>
<dbReference type="InterPro" id="IPR013154">
    <property type="entry name" value="ADH-like_N"/>
</dbReference>
<dbReference type="InterPro" id="IPR002328">
    <property type="entry name" value="ADH_Zn_CS"/>
</dbReference>
<dbReference type="InterPro" id="IPR011032">
    <property type="entry name" value="GroES-like_sf"/>
</dbReference>
<dbReference type="InterPro" id="IPR036291">
    <property type="entry name" value="NAD(P)-bd_dom_sf"/>
</dbReference>
<dbReference type="InterPro" id="IPR020843">
    <property type="entry name" value="PKS_ER"/>
</dbReference>
<dbReference type="PANTHER" id="PTHR42940">
    <property type="entry name" value="ALCOHOL DEHYDROGENASE 1-RELATED"/>
    <property type="match status" value="1"/>
</dbReference>
<dbReference type="PANTHER" id="PTHR42940:SF3">
    <property type="entry name" value="ALCOHOL DEHYDROGENASE 1-RELATED"/>
    <property type="match status" value="1"/>
</dbReference>
<dbReference type="Pfam" id="PF08240">
    <property type="entry name" value="ADH_N"/>
    <property type="match status" value="1"/>
</dbReference>
<dbReference type="Pfam" id="PF00107">
    <property type="entry name" value="ADH_zinc_N"/>
    <property type="match status" value="1"/>
</dbReference>
<dbReference type="SMART" id="SM00829">
    <property type="entry name" value="PKS_ER"/>
    <property type="match status" value="1"/>
</dbReference>
<dbReference type="SUPFAM" id="SSF50129">
    <property type="entry name" value="GroES-like"/>
    <property type="match status" value="1"/>
</dbReference>
<dbReference type="SUPFAM" id="SSF51735">
    <property type="entry name" value="NAD(P)-binding Rossmann-fold domains"/>
    <property type="match status" value="1"/>
</dbReference>
<dbReference type="PROSITE" id="PS00059">
    <property type="entry name" value="ADH_ZINC"/>
    <property type="match status" value="1"/>
</dbReference>
<proteinExistence type="evidence at protein level"/>
<feature type="chain" id="PRO_0000160717" description="Alcohol dehydrogenase 1">
    <location>
        <begin position="1"/>
        <end position="350"/>
    </location>
</feature>
<feature type="binding site" evidence="1">
    <location>
        <position position="46"/>
    </location>
    <ligand>
        <name>Zn(2+)</name>
        <dbReference type="ChEBI" id="CHEBI:29105"/>
        <label>1</label>
        <note>catalytic</note>
    </ligand>
</feature>
<feature type="binding site" evidence="1">
    <location>
        <position position="69"/>
    </location>
    <ligand>
        <name>Zn(2+)</name>
        <dbReference type="ChEBI" id="CHEBI:29105"/>
        <label>1</label>
        <note>catalytic</note>
    </ligand>
</feature>
<feature type="binding site" evidence="1">
    <location>
        <position position="100"/>
    </location>
    <ligand>
        <name>Zn(2+)</name>
        <dbReference type="ChEBI" id="CHEBI:29105"/>
        <label>2</label>
    </ligand>
</feature>
<feature type="binding site" evidence="1">
    <location>
        <position position="103"/>
    </location>
    <ligand>
        <name>Zn(2+)</name>
        <dbReference type="ChEBI" id="CHEBI:29105"/>
        <label>2</label>
    </ligand>
</feature>
<feature type="binding site" evidence="1">
    <location>
        <position position="106"/>
    </location>
    <ligand>
        <name>Zn(2+)</name>
        <dbReference type="ChEBI" id="CHEBI:29105"/>
        <label>2</label>
    </ligand>
</feature>
<feature type="binding site" evidence="1">
    <location>
        <position position="114"/>
    </location>
    <ligand>
        <name>Zn(2+)</name>
        <dbReference type="ChEBI" id="CHEBI:29105"/>
        <label>2</label>
    </ligand>
</feature>
<feature type="binding site" evidence="1">
    <location>
        <position position="156"/>
    </location>
    <ligand>
        <name>Zn(2+)</name>
        <dbReference type="ChEBI" id="CHEBI:29105"/>
        <label>1</label>
        <note>catalytic</note>
    </ligand>
</feature>
<feature type="binding site" evidence="1">
    <location>
        <begin position="180"/>
        <end position="186"/>
    </location>
    <ligand>
        <name>NAD(+)</name>
        <dbReference type="ChEBI" id="CHEBI:57540"/>
    </ligand>
</feature>
<feature type="binding site" evidence="1">
    <location>
        <position position="204"/>
    </location>
    <ligand>
        <name>NAD(+)</name>
        <dbReference type="ChEBI" id="CHEBI:57540"/>
    </ligand>
</feature>
<feature type="binding site" evidence="1">
    <location>
        <position position="209"/>
    </location>
    <ligand>
        <name>NAD(+)</name>
        <dbReference type="ChEBI" id="CHEBI:57540"/>
    </ligand>
</feature>
<feature type="binding site" evidence="1">
    <location>
        <begin position="271"/>
        <end position="273"/>
    </location>
    <ligand>
        <name>NAD(+)</name>
        <dbReference type="ChEBI" id="CHEBI:57540"/>
    </ligand>
</feature>
<feature type="binding site" evidence="1">
    <location>
        <position position="343"/>
    </location>
    <ligand>
        <name>NAD(+)</name>
        <dbReference type="ChEBI" id="CHEBI:57540"/>
    </ligand>
</feature>
<feature type="sequence conflict" description="In Ref. 2; AAA53300." evidence="2" ref="2">
    <original>H</original>
    <variation>N</variation>
    <location>
        <position position="39"/>
    </location>
</feature>
<feature type="sequence conflict" description="In Ref. 2; AAA53300." evidence="2" ref="2">
    <original>R</original>
    <variation>W</variation>
    <location>
        <position position="53"/>
    </location>
</feature>
<feature type="sequence conflict" description="In Ref. 3; no nucleotide entry." evidence="2" ref="3">
    <original>A</original>
    <variation>T</variation>
    <location>
        <position position="140"/>
    </location>
</feature>
<feature type="sequence conflict" description="In Ref. 2; AAA53300." evidence="2" ref="2">
    <original>F</original>
    <variation>L</variation>
    <location>
        <position position="212"/>
    </location>
</feature>
<feature type="sequence conflict" description="In Ref. 3; no nucleotide entry." evidence="2" ref="3">
    <original>D</original>
    <variation>A</variation>
    <location>
        <position position="227"/>
    </location>
</feature>
<feature type="sequence conflict" description="In Ref. 3; no nucleotide entry." evidence="2" ref="3">
    <original>R</original>
    <variation>S</variation>
    <location>
        <position position="313"/>
    </location>
</feature>
<feature type="sequence conflict" description="In Ref. 2; AAA53300." evidence="2" ref="2">
    <original>D</original>
    <variation>E</variation>
    <location>
        <position position="327"/>
    </location>
</feature>
<organism>
    <name type="scientific">Candida albicans</name>
    <name type="common">Yeast</name>
    <dbReference type="NCBI Taxonomy" id="5476"/>
    <lineage>
        <taxon>Eukaryota</taxon>
        <taxon>Fungi</taxon>
        <taxon>Dikarya</taxon>
        <taxon>Ascomycota</taxon>
        <taxon>Saccharomycotina</taxon>
        <taxon>Pichiomycetes</taxon>
        <taxon>Debaryomycetaceae</taxon>
        <taxon>Candida/Lodderomyces clade</taxon>
        <taxon>Candida</taxon>
    </lineage>
</organism>
<sequence length="350" mass="36879">MSEQIPKTQKAVVFDTNGGQLVYKDYPVPTPKPNELLIHVKYSGVCHTDLHARKGDWPLATKLPLVGGHEGAGVVVGMGENVKGWKIGDFAGIKWLNGSCMSCEFCQQGAEPNCGEADLSGYTHDGSFEQYATADAVQAAKIPAGTDLANVAPILCAGVTVYKALKTADLAAGQWVAISGAGGGLGSLAVQYARAMGLRVVAIDGGDEKGEFVKSLGAEAYVDFTKDKDIVEAVKKATDGGPHGAINVSVSEKAIDQSVEYVRPLGKVVLVGLPAHAKVTAPVFDAVVKSIEIKGSYVGNRKDTAEAIDFFSRGLIKCPIKIVGLSDLPEVFKLMEEGKILGRYVLDTSK</sequence>
<gene>
    <name type="primary">ADH1</name>
    <name type="synonym">CAD</name>
</gene>